<comment type="function">
    <text evidence="1">Catalyzes the reversible interconversion of serine and glycine with tetrahydrofolate (THF) serving as the one-carbon carrier. This reaction serves as the major source of one-carbon groups required for the biosynthesis of purines, thymidylate, methionine, and other important biomolecules. Also exhibits THF-independent aldolase activity toward beta-hydroxyamino acids, producing glycine and aldehydes, via a retro-aldol mechanism.</text>
</comment>
<comment type="catalytic activity">
    <reaction evidence="1">
        <text>(6R)-5,10-methylene-5,6,7,8-tetrahydrofolate + glycine + H2O = (6S)-5,6,7,8-tetrahydrofolate + L-serine</text>
        <dbReference type="Rhea" id="RHEA:15481"/>
        <dbReference type="ChEBI" id="CHEBI:15377"/>
        <dbReference type="ChEBI" id="CHEBI:15636"/>
        <dbReference type="ChEBI" id="CHEBI:33384"/>
        <dbReference type="ChEBI" id="CHEBI:57305"/>
        <dbReference type="ChEBI" id="CHEBI:57453"/>
        <dbReference type="EC" id="2.1.2.1"/>
    </reaction>
</comment>
<comment type="cofactor">
    <cofactor evidence="1">
        <name>pyridoxal 5'-phosphate</name>
        <dbReference type="ChEBI" id="CHEBI:597326"/>
    </cofactor>
</comment>
<comment type="pathway">
    <text evidence="1">One-carbon metabolism; tetrahydrofolate interconversion.</text>
</comment>
<comment type="pathway">
    <text evidence="1">Amino-acid biosynthesis; glycine biosynthesis; glycine from L-serine: step 1/1.</text>
</comment>
<comment type="subunit">
    <text evidence="1">Homodimer.</text>
</comment>
<comment type="subcellular location">
    <subcellularLocation>
        <location evidence="1">Cytoplasm</location>
    </subcellularLocation>
</comment>
<comment type="similarity">
    <text evidence="1">Belongs to the SHMT family.</text>
</comment>
<dbReference type="EC" id="2.1.2.1" evidence="1"/>
<dbReference type="EMBL" id="CP000552">
    <property type="protein sequence ID" value="ABM71500.1"/>
    <property type="molecule type" value="Genomic_DNA"/>
</dbReference>
<dbReference type="RefSeq" id="WP_011819610.1">
    <property type="nucleotide sequence ID" value="NC_008817.1"/>
</dbReference>
<dbReference type="SMR" id="A2BUN9"/>
<dbReference type="STRING" id="167542.P9515_02911"/>
<dbReference type="GeneID" id="60200424"/>
<dbReference type="KEGG" id="pmc:P9515_02911"/>
<dbReference type="eggNOG" id="COG0112">
    <property type="taxonomic scope" value="Bacteria"/>
</dbReference>
<dbReference type="HOGENOM" id="CLU_022477_2_1_3"/>
<dbReference type="OrthoDB" id="9803846at2"/>
<dbReference type="UniPathway" id="UPA00193"/>
<dbReference type="UniPathway" id="UPA00288">
    <property type="reaction ID" value="UER01023"/>
</dbReference>
<dbReference type="Proteomes" id="UP000001589">
    <property type="component" value="Chromosome"/>
</dbReference>
<dbReference type="GO" id="GO:0005829">
    <property type="term" value="C:cytosol"/>
    <property type="evidence" value="ECO:0007669"/>
    <property type="project" value="TreeGrafter"/>
</dbReference>
<dbReference type="GO" id="GO:0004372">
    <property type="term" value="F:glycine hydroxymethyltransferase activity"/>
    <property type="evidence" value="ECO:0007669"/>
    <property type="project" value="UniProtKB-UniRule"/>
</dbReference>
<dbReference type="GO" id="GO:0030170">
    <property type="term" value="F:pyridoxal phosphate binding"/>
    <property type="evidence" value="ECO:0007669"/>
    <property type="project" value="UniProtKB-UniRule"/>
</dbReference>
<dbReference type="GO" id="GO:0019264">
    <property type="term" value="P:glycine biosynthetic process from serine"/>
    <property type="evidence" value="ECO:0007669"/>
    <property type="project" value="UniProtKB-UniRule"/>
</dbReference>
<dbReference type="GO" id="GO:0035999">
    <property type="term" value="P:tetrahydrofolate interconversion"/>
    <property type="evidence" value="ECO:0007669"/>
    <property type="project" value="UniProtKB-UniRule"/>
</dbReference>
<dbReference type="CDD" id="cd00378">
    <property type="entry name" value="SHMT"/>
    <property type="match status" value="1"/>
</dbReference>
<dbReference type="FunFam" id="3.40.640.10:FF:000001">
    <property type="entry name" value="Serine hydroxymethyltransferase"/>
    <property type="match status" value="1"/>
</dbReference>
<dbReference type="Gene3D" id="3.90.1150.10">
    <property type="entry name" value="Aspartate Aminotransferase, domain 1"/>
    <property type="match status" value="1"/>
</dbReference>
<dbReference type="Gene3D" id="3.40.640.10">
    <property type="entry name" value="Type I PLP-dependent aspartate aminotransferase-like (Major domain)"/>
    <property type="match status" value="1"/>
</dbReference>
<dbReference type="HAMAP" id="MF_00051">
    <property type="entry name" value="SHMT"/>
    <property type="match status" value="1"/>
</dbReference>
<dbReference type="InterPro" id="IPR015424">
    <property type="entry name" value="PyrdxlP-dep_Trfase"/>
</dbReference>
<dbReference type="InterPro" id="IPR015421">
    <property type="entry name" value="PyrdxlP-dep_Trfase_major"/>
</dbReference>
<dbReference type="InterPro" id="IPR015422">
    <property type="entry name" value="PyrdxlP-dep_Trfase_small"/>
</dbReference>
<dbReference type="InterPro" id="IPR001085">
    <property type="entry name" value="Ser_HO-MeTrfase"/>
</dbReference>
<dbReference type="InterPro" id="IPR049943">
    <property type="entry name" value="Ser_HO-MeTrfase-like"/>
</dbReference>
<dbReference type="InterPro" id="IPR019798">
    <property type="entry name" value="Ser_HO-MeTrfase_PLP_BS"/>
</dbReference>
<dbReference type="InterPro" id="IPR039429">
    <property type="entry name" value="SHMT-like_dom"/>
</dbReference>
<dbReference type="NCBIfam" id="NF000586">
    <property type="entry name" value="PRK00011.1"/>
    <property type="match status" value="1"/>
</dbReference>
<dbReference type="PANTHER" id="PTHR11680">
    <property type="entry name" value="SERINE HYDROXYMETHYLTRANSFERASE"/>
    <property type="match status" value="1"/>
</dbReference>
<dbReference type="PANTHER" id="PTHR11680:SF35">
    <property type="entry name" value="SERINE HYDROXYMETHYLTRANSFERASE 1"/>
    <property type="match status" value="1"/>
</dbReference>
<dbReference type="Pfam" id="PF00464">
    <property type="entry name" value="SHMT"/>
    <property type="match status" value="1"/>
</dbReference>
<dbReference type="PIRSF" id="PIRSF000412">
    <property type="entry name" value="SHMT"/>
    <property type="match status" value="1"/>
</dbReference>
<dbReference type="SUPFAM" id="SSF53383">
    <property type="entry name" value="PLP-dependent transferases"/>
    <property type="match status" value="1"/>
</dbReference>
<dbReference type="PROSITE" id="PS00096">
    <property type="entry name" value="SHMT"/>
    <property type="match status" value="1"/>
</dbReference>
<organism>
    <name type="scientific">Prochlorococcus marinus (strain MIT 9515)</name>
    <dbReference type="NCBI Taxonomy" id="167542"/>
    <lineage>
        <taxon>Bacteria</taxon>
        <taxon>Bacillati</taxon>
        <taxon>Cyanobacteriota</taxon>
        <taxon>Cyanophyceae</taxon>
        <taxon>Synechococcales</taxon>
        <taxon>Prochlorococcaceae</taxon>
        <taxon>Prochlorococcus</taxon>
    </lineage>
</organism>
<keyword id="KW-0028">Amino-acid biosynthesis</keyword>
<keyword id="KW-0963">Cytoplasm</keyword>
<keyword id="KW-0554">One-carbon metabolism</keyword>
<keyword id="KW-0663">Pyridoxal phosphate</keyword>
<keyword id="KW-0808">Transferase</keyword>
<reference key="1">
    <citation type="journal article" date="2007" name="PLoS Genet.">
        <title>Patterns and implications of gene gain and loss in the evolution of Prochlorococcus.</title>
        <authorList>
            <person name="Kettler G.C."/>
            <person name="Martiny A.C."/>
            <person name="Huang K."/>
            <person name="Zucker J."/>
            <person name="Coleman M.L."/>
            <person name="Rodrigue S."/>
            <person name="Chen F."/>
            <person name="Lapidus A."/>
            <person name="Ferriera S."/>
            <person name="Johnson J."/>
            <person name="Steglich C."/>
            <person name="Church G.M."/>
            <person name="Richardson P."/>
            <person name="Chisholm S.W."/>
        </authorList>
    </citation>
    <scope>NUCLEOTIDE SEQUENCE [LARGE SCALE GENOMIC DNA]</scope>
    <source>
        <strain>MIT 9515</strain>
    </source>
</reference>
<protein>
    <recommendedName>
        <fullName evidence="1">Serine hydroxymethyltransferase</fullName>
        <shortName evidence="1">SHMT</shortName>
        <shortName evidence="1">Serine methylase</shortName>
        <ecNumber evidence="1">2.1.2.1</ecNumber>
    </recommendedName>
</protein>
<name>GLYA_PROM5</name>
<sequence>MNILQNLKKSDPIISNLINSEKNRQETHLELIASENFASMAVMQAQGSVLTNKYAEGLPQKRYYGGCEFVDEIEELAIERAKQLFDADWANVQPHSGAQANAAVFLSLLNPGDTILGMDLSHGGHLTHGSPVNMSGKWFNAVHYGVDKETNKLNFNVIRDIALATKPKLIICGYSAYPRTIDFKSFRSIADEVGAFLMADIAHIAGLVASKLHPNPIPYCDVVTTTTHKTLRGPRGGLILCKDKEFGKKFDKSVFPGTQGGPLEHIIAAKAVAFGEALQPNFVNYSKQVIKNAKVLSSTLINRGIDIVSGGTDNHIVLLDLRSINMTGKVADLLVSEVNITANKNTVPFDPESPFVTSGLRLGTAALTTRGFNDEAFIEVGEIIADRLLNPDDLLIEKECKERVLSLCNSFPLYEAKLESSIK</sequence>
<accession>A2BUN9</accession>
<evidence type="ECO:0000255" key="1">
    <source>
        <dbReference type="HAMAP-Rule" id="MF_00051"/>
    </source>
</evidence>
<feature type="chain" id="PRO_1000006296" description="Serine hydroxymethyltransferase">
    <location>
        <begin position="1"/>
        <end position="423"/>
    </location>
</feature>
<feature type="binding site" evidence="1">
    <location>
        <position position="120"/>
    </location>
    <ligand>
        <name>(6S)-5,6,7,8-tetrahydrofolate</name>
        <dbReference type="ChEBI" id="CHEBI:57453"/>
    </ligand>
</feature>
<feature type="binding site" evidence="1">
    <location>
        <begin position="124"/>
        <end position="126"/>
    </location>
    <ligand>
        <name>(6S)-5,6,7,8-tetrahydrofolate</name>
        <dbReference type="ChEBI" id="CHEBI:57453"/>
    </ligand>
</feature>
<feature type="binding site" evidence="1">
    <location>
        <begin position="353"/>
        <end position="355"/>
    </location>
    <ligand>
        <name>(6S)-5,6,7,8-tetrahydrofolate</name>
        <dbReference type="ChEBI" id="CHEBI:57453"/>
    </ligand>
</feature>
<feature type="site" description="Plays an important role in substrate specificity" evidence="1">
    <location>
        <position position="228"/>
    </location>
</feature>
<feature type="modified residue" description="N6-(pyridoxal phosphate)lysine" evidence="1">
    <location>
        <position position="229"/>
    </location>
</feature>
<proteinExistence type="inferred from homology"/>
<gene>
    <name evidence="1" type="primary">glyA</name>
    <name type="ordered locus">P9515_02911</name>
</gene>